<feature type="chain" id="PRO_0000191509" description="Sperm protamine P1">
    <location>
        <begin position="1"/>
        <end position="62"/>
    </location>
</feature>
<feature type="region of interest" description="Disordered" evidence="1">
    <location>
        <begin position="1"/>
        <end position="62"/>
    </location>
</feature>
<comment type="function">
    <text>Protamines substitute for histones in the chromatin of sperm during the haploid phase of spermatogenesis. They compact sperm DNA into a highly condensed, stable and inactive complex.</text>
</comment>
<comment type="subcellular location">
    <subcellularLocation>
        <location>Nucleus</location>
    </subcellularLocation>
    <subcellularLocation>
        <location>Chromosome</location>
    </subcellularLocation>
</comment>
<comment type="tissue specificity">
    <text>Testis.</text>
</comment>
<comment type="similarity">
    <text evidence="2">Belongs to the protamine P1 family.</text>
</comment>
<sequence length="62" mass="8522">MARYRRHSRSRSRSRYRRRRRRRSRGRRRRTYRRSRRHSRRRRGRRRGYSRRRYSRRGRRRY</sequence>
<organism>
    <name type="scientific">Neophascogale lorentzii</name>
    <name type="common">Long-clawed marsupial mouse</name>
    <name type="synonym">Speckled dasyure</name>
    <dbReference type="NCBI Taxonomy" id="32551"/>
    <lineage>
        <taxon>Eukaryota</taxon>
        <taxon>Metazoa</taxon>
        <taxon>Chordata</taxon>
        <taxon>Craniata</taxon>
        <taxon>Vertebrata</taxon>
        <taxon>Euteleostomi</taxon>
        <taxon>Mammalia</taxon>
        <taxon>Metatheria</taxon>
        <taxon>Dasyuromorphia</taxon>
        <taxon>Dasyuridae</taxon>
        <taxon>Neophascogale</taxon>
    </lineage>
</organism>
<accession>P67852</accession>
<accession>P42130</accession>
<accession>P42146</accession>
<keyword id="KW-0158">Chromosome</keyword>
<keyword id="KW-0217">Developmental protein</keyword>
<keyword id="KW-0221">Differentiation</keyword>
<keyword id="KW-0226">DNA condensation</keyword>
<keyword id="KW-0238">DNA-binding</keyword>
<keyword id="KW-0544">Nucleosome core</keyword>
<keyword id="KW-0539">Nucleus</keyword>
<keyword id="KW-0744">Spermatogenesis</keyword>
<protein>
    <recommendedName>
        <fullName>Sperm protamine P1</fullName>
    </recommendedName>
</protein>
<dbReference type="EMBL" id="AF010267">
    <property type="protein sequence ID" value="AAB69297.1"/>
    <property type="molecule type" value="Genomic_DNA"/>
</dbReference>
<dbReference type="GO" id="GO:0000786">
    <property type="term" value="C:nucleosome"/>
    <property type="evidence" value="ECO:0007669"/>
    <property type="project" value="UniProtKB-KW"/>
</dbReference>
<dbReference type="GO" id="GO:0005634">
    <property type="term" value="C:nucleus"/>
    <property type="evidence" value="ECO:0007669"/>
    <property type="project" value="UniProtKB-SubCell"/>
</dbReference>
<dbReference type="GO" id="GO:0003677">
    <property type="term" value="F:DNA binding"/>
    <property type="evidence" value="ECO:0007669"/>
    <property type="project" value="UniProtKB-KW"/>
</dbReference>
<dbReference type="GO" id="GO:0030261">
    <property type="term" value="P:chromosome condensation"/>
    <property type="evidence" value="ECO:0007669"/>
    <property type="project" value="UniProtKB-KW"/>
</dbReference>
<dbReference type="GO" id="GO:0035092">
    <property type="term" value="P:sperm DNA condensation"/>
    <property type="evidence" value="ECO:0007669"/>
    <property type="project" value="InterPro"/>
</dbReference>
<dbReference type="InterPro" id="IPR000221">
    <property type="entry name" value="Protamine_P1"/>
</dbReference>
<dbReference type="PROSITE" id="PS00048">
    <property type="entry name" value="PROTAMINE_P1"/>
    <property type="match status" value="1"/>
</dbReference>
<evidence type="ECO:0000256" key="1">
    <source>
        <dbReference type="SAM" id="MobiDB-lite"/>
    </source>
</evidence>
<evidence type="ECO:0000305" key="2"/>
<proteinExistence type="evidence at transcript level"/>
<name>HSP1_NEOLO</name>
<reference key="1">
    <citation type="journal article" date="1997" name="J. Mammal. Evol.">
        <title>Reconstructing the taxonomic radiation of dasyurine marsupials with cytochrome b, 12S rRNA, and protamine P1 gene trees.</title>
        <authorList>
            <person name="Krajewski C."/>
            <person name="Young J."/>
            <person name="Buckley L."/>
            <person name="Woolley P.A."/>
            <person name="Westerman M."/>
        </authorList>
    </citation>
    <scope>NUCLEOTIDE SEQUENCE [GENOMIC DNA]</scope>
</reference>
<gene>
    <name type="primary">PRM1</name>
</gene>